<sequence length="73" mass="8215">MSKKDVIELEGTIVEALPNAMFKVELENGHTILGHISGKMRMNYIKILPGDGVTVQISPYDLSRGRIVYRKKN</sequence>
<reference key="1">
    <citation type="journal article" date="2002" name="J. Bacteriol.">
        <title>Genome sequence and analysis of the oral bacterium Fusobacterium nucleatum strain ATCC 25586.</title>
        <authorList>
            <person name="Kapatral V."/>
            <person name="Anderson I."/>
            <person name="Ivanova N."/>
            <person name="Reznik G."/>
            <person name="Los T."/>
            <person name="Lykidis A."/>
            <person name="Bhattacharyya A."/>
            <person name="Bartman A."/>
            <person name="Gardner W."/>
            <person name="Grechkin G."/>
            <person name="Zhu L."/>
            <person name="Vasieva O."/>
            <person name="Chu L."/>
            <person name="Kogan Y."/>
            <person name="Chaga O."/>
            <person name="Goltsman E."/>
            <person name="Bernal A."/>
            <person name="Larsen N."/>
            <person name="D'Souza M."/>
            <person name="Walunas T."/>
            <person name="Pusch G."/>
            <person name="Haselkorn R."/>
            <person name="Fonstein M."/>
            <person name="Kyrpides N.C."/>
            <person name="Overbeek R."/>
        </authorList>
    </citation>
    <scope>NUCLEOTIDE SEQUENCE [LARGE SCALE GENOMIC DNA]</scope>
    <source>
        <strain>ATCC 25586 / DSM 15643 / BCRC 10681 / CIP 101130 / JCM 8532 / KCTC 2640 / LMG 13131 / VPI 4355</strain>
    </source>
</reference>
<dbReference type="EMBL" id="AE009951">
    <property type="protein sequence ID" value="AAL95483.1"/>
    <property type="status" value="ALT_INIT"/>
    <property type="molecule type" value="Genomic_DNA"/>
</dbReference>
<dbReference type="RefSeq" id="NP_604184.1">
    <property type="nucleotide sequence ID" value="NC_003454.1"/>
</dbReference>
<dbReference type="RefSeq" id="WP_005899265.1">
    <property type="nucleotide sequence ID" value="NZ_OZ209243.1"/>
</dbReference>
<dbReference type="SMR" id="Q8R5W2"/>
<dbReference type="FunCoup" id="Q8R5W2">
    <property type="interactions" value="275"/>
</dbReference>
<dbReference type="STRING" id="190304.FN1287"/>
<dbReference type="PaxDb" id="190304-FN1287"/>
<dbReference type="EnsemblBacteria" id="AAL95483">
    <property type="protein sequence ID" value="AAL95483"/>
    <property type="gene ID" value="FN1287"/>
</dbReference>
<dbReference type="GeneID" id="93328133"/>
<dbReference type="KEGG" id="fnu:FN1287"/>
<dbReference type="PATRIC" id="fig|190304.8.peg.1853"/>
<dbReference type="eggNOG" id="COG0361">
    <property type="taxonomic scope" value="Bacteria"/>
</dbReference>
<dbReference type="HOGENOM" id="CLU_151267_1_0_0"/>
<dbReference type="InParanoid" id="Q8R5W2"/>
<dbReference type="Proteomes" id="UP000002521">
    <property type="component" value="Chromosome"/>
</dbReference>
<dbReference type="GO" id="GO:0005829">
    <property type="term" value="C:cytosol"/>
    <property type="evidence" value="ECO:0000318"/>
    <property type="project" value="GO_Central"/>
</dbReference>
<dbReference type="GO" id="GO:0043022">
    <property type="term" value="F:ribosome binding"/>
    <property type="evidence" value="ECO:0000318"/>
    <property type="project" value="GO_Central"/>
</dbReference>
<dbReference type="GO" id="GO:0019843">
    <property type="term" value="F:rRNA binding"/>
    <property type="evidence" value="ECO:0007669"/>
    <property type="project" value="UniProtKB-UniRule"/>
</dbReference>
<dbReference type="GO" id="GO:0003743">
    <property type="term" value="F:translation initiation factor activity"/>
    <property type="evidence" value="ECO:0007669"/>
    <property type="project" value="UniProtKB-UniRule"/>
</dbReference>
<dbReference type="CDD" id="cd04451">
    <property type="entry name" value="S1_IF1"/>
    <property type="match status" value="1"/>
</dbReference>
<dbReference type="FunFam" id="2.40.50.140:FF:000002">
    <property type="entry name" value="Translation initiation factor IF-1"/>
    <property type="match status" value="1"/>
</dbReference>
<dbReference type="Gene3D" id="2.40.50.140">
    <property type="entry name" value="Nucleic acid-binding proteins"/>
    <property type="match status" value="1"/>
</dbReference>
<dbReference type="HAMAP" id="MF_00075">
    <property type="entry name" value="IF_1"/>
    <property type="match status" value="1"/>
</dbReference>
<dbReference type="InterPro" id="IPR012340">
    <property type="entry name" value="NA-bd_OB-fold"/>
</dbReference>
<dbReference type="InterPro" id="IPR006196">
    <property type="entry name" value="RNA-binding_domain_S1_IF1"/>
</dbReference>
<dbReference type="InterPro" id="IPR003029">
    <property type="entry name" value="S1_domain"/>
</dbReference>
<dbReference type="InterPro" id="IPR004368">
    <property type="entry name" value="TIF_IF1"/>
</dbReference>
<dbReference type="NCBIfam" id="TIGR00008">
    <property type="entry name" value="infA"/>
    <property type="match status" value="1"/>
</dbReference>
<dbReference type="PANTHER" id="PTHR33370">
    <property type="entry name" value="TRANSLATION INITIATION FACTOR IF-1, CHLOROPLASTIC"/>
    <property type="match status" value="1"/>
</dbReference>
<dbReference type="PANTHER" id="PTHR33370:SF1">
    <property type="entry name" value="TRANSLATION INITIATION FACTOR IF-1, CHLOROPLASTIC"/>
    <property type="match status" value="1"/>
</dbReference>
<dbReference type="Pfam" id="PF01176">
    <property type="entry name" value="eIF-1a"/>
    <property type="match status" value="1"/>
</dbReference>
<dbReference type="SMART" id="SM00316">
    <property type="entry name" value="S1"/>
    <property type="match status" value="1"/>
</dbReference>
<dbReference type="SUPFAM" id="SSF50249">
    <property type="entry name" value="Nucleic acid-binding proteins"/>
    <property type="match status" value="1"/>
</dbReference>
<dbReference type="PROSITE" id="PS50832">
    <property type="entry name" value="S1_IF1_TYPE"/>
    <property type="match status" value="1"/>
</dbReference>
<protein>
    <recommendedName>
        <fullName evidence="1">Translation initiation factor IF-1</fullName>
    </recommendedName>
</protein>
<name>IF1_FUSNN</name>
<evidence type="ECO:0000255" key="1">
    <source>
        <dbReference type="HAMAP-Rule" id="MF_00075"/>
    </source>
</evidence>
<evidence type="ECO:0000305" key="2"/>
<proteinExistence type="inferred from homology"/>
<feature type="chain" id="PRO_0000095791" description="Translation initiation factor IF-1">
    <location>
        <begin position="1"/>
        <end position="73"/>
    </location>
</feature>
<feature type="domain" description="S1-like" evidence="1">
    <location>
        <begin position="1"/>
        <end position="72"/>
    </location>
</feature>
<organism>
    <name type="scientific">Fusobacterium nucleatum subsp. nucleatum (strain ATCC 25586 / DSM 15643 / BCRC 10681 / CIP 101130 / JCM 8532 / KCTC 2640 / LMG 13131 / VPI 4355)</name>
    <dbReference type="NCBI Taxonomy" id="190304"/>
    <lineage>
        <taxon>Bacteria</taxon>
        <taxon>Fusobacteriati</taxon>
        <taxon>Fusobacteriota</taxon>
        <taxon>Fusobacteriia</taxon>
        <taxon>Fusobacteriales</taxon>
        <taxon>Fusobacteriaceae</taxon>
        <taxon>Fusobacterium</taxon>
    </lineage>
</organism>
<accession>Q8R5W2</accession>
<gene>
    <name evidence="1" type="primary">infA</name>
    <name type="ordered locus">FN1287</name>
</gene>
<comment type="function">
    <text evidence="1">One of the essential components for the initiation of protein synthesis. Stabilizes the binding of IF-2 and IF-3 on the 30S subunit to which N-formylmethionyl-tRNA(fMet) subsequently binds. Helps modulate mRNA selection, yielding the 30S pre-initiation complex (PIC). Upon addition of the 50S ribosomal subunit IF-1, IF-2 and IF-3 are released leaving the mature 70S translation initiation complex.</text>
</comment>
<comment type="subunit">
    <text evidence="1">Component of the 30S ribosomal translation pre-initiation complex which assembles on the 30S ribosome in the order IF-2 and IF-3, IF-1 and N-formylmethionyl-tRNA(fMet); mRNA recruitment can occur at any time during PIC assembly.</text>
</comment>
<comment type="subcellular location">
    <subcellularLocation>
        <location evidence="1">Cytoplasm</location>
    </subcellularLocation>
</comment>
<comment type="similarity">
    <text evidence="1">Belongs to the IF-1 family.</text>
</comment>
<comment type="sequence caution" evidence="2">
    <conflict type="erroneous initiation">
        <sequence resource="EMBL-CDS" id="AAL95483"/>
    </conflict>
    <text>Extended N-terminus.</text>
</comment>
<keyword id="KW-0963">Cytoplasm</keyword>
<keyword id="KW-0396">Initiation factor</keyword>
<keyword id="KW-0648">Protein biosynthesis</keyword>
<keyword id="KW-1185">Reference proteome</keyword>
<keyword id="KW-0694">RNA-binding</keyword>
<keyword id="KW-0699">rRNA-binding</keyword>